<protein>
    <recommendedName>
        <fullName evidence="2">Large ribosomal subunit protein bL34</fullName>
    </recommendedName>
    <alternativeName>
        <fullName>50S ribosomal protein L34</fullName>
    </alternativeName>
</protein>
<reference key="1">
    <citation type="journal article" date="1998" name="Nature">
        <title>The complete genome of the hyperthermophilic bacterium Aquifex aeolicus.</title>
        <authorList>
            <person name="Deckert G."/>
            <person name="Warren P.V."/>
            <person name="Gaasterland T."/>
            <person name="Young W.G."/>
            <person name="Lenox A.L."/>
            <person name="Graham D.E."/>
            <person name="Overbeek R."/>
            <person name="Snead M.A."/>
            <person name="Keller M."/>
            <person name="Aujay M."/>
            <person name="Huber R."/>
            <person name="Feldman R.A."/>
            <person name="Short J.M."/>
            <person name="Olsen G.J."/>
            <person name="Swanson R.V."/>
        </authorList>
    </citation>
    <scope>NUCLEOTIDE SEQUENCE [LARGE SCALE GENOMIC DNA]</scope>
    <source>
        <strain>VF5</strain>
    </source>
</reference>
<feature type="chain" id="PRO_0000187335" description="Large ribosomal subunit protein bL34">
    <location>
        <begin position="1"/>
        <end position="47"/>
    </location>
</feature>
<feature type="region of interest" description="Disordered" evidence="1">
    <location>
        <begin position="1"/>
        <end position="47"/>
    </location>
</feature>
<feature type="compositionally biased region" description="Basic residues" evidence="1">
    <location>
        <begin position="10"/>
        <end position="47"/>
    </location>
</feature>
<organism>
    <name type="scientific">Aquifex aeolicus (strain VF5)</name>
    <dbReference type="NCBI Taxonomy" id="224324"/>
    <lineage>
        <taxon>Bacteria</taxon>
        <taxon>Pseudomonadati</taxon>
        <taxon>Aquificota</taxon>
        <taxon>Aquificia</taxon>
        <taxon>Aquificales</taxon>
        <taxon>Aquificaceae</taxon>
        <taxon>Aquifex</taxon>
    </lineage>
</organism>
<gene>
    <name type="primary">rpmH</name>
    <name type="ordered locus">aq_176</name>
</gene>
<name>RL34_AQUAE</name>
<comment type="similarity">
    <text evidence="2">Belongs to the bacterial ribosomal protein bL34 family.</text>
</comment>
<evidence type="ECO:0000256" key="1">
    <source>
        <dbReference type="SAM" id="MobiDB-lite"/>
    </source>
</evidence>
<evidence type="ECO:0000305" key="2"/>
<proteinExistence type="inferred from homology"/>
<sequence>MVTEGLKPHISIKKKKRKSGFLARMRTKSGRKIIARRRRKGRKRLAP</sequence>
<accession>O66563</accession>
<keyword id="KW-1185">Reference proteome</keyword>
<keyword id="KW-0687">Ribonucleoprotein</keyword>
<keyword id="KW-0689">Ribosomal protein</keyword>
<dbReference type="EMBL" id="AE000657">
    <property type="protein sequence ID" value="AAC06537.1"/>
    <property type="molecule type" value="Genomic_DNA"/>
</dbReference>
<dbReference type="PIR" id="G70316">
    <property type="entry name" value="G70316"/>
</dbReference>
<dbReference type="RefSeq" id="NP_213123.1">
    <property type="nucleotide sequence ID" value="NC_000918.1"/>
</dbReference>
<dbReference type="RefSeq" id="WP_010880061.1">
    <property type="nucleotide sequence ID" value="NC_000918.1"/>
</dbReference>
<dbReference type="SMR" id="O66563"/>
<dbReference type="FunCoup" id="O66563">
    <property type="interactions" value="326"/>
</dbReference>
<dbReference type="STRING" id="224324.aq_176"/>
<dbReference type="EnsemblBacteria" id="AAC06537">
    <property type="protein sequence ID" value="AAC06537"/>
    <property type="gene ID" value="aq_176"/>
</dbReference>
<dbReference type="KEGG" id="aae:aq_175b"/>
<dbReference type="PATRIC" id="fig|224324.8.peg.153"/>
<dbReference type="eggNOG" id="ENOG502ZJWB">
    <property type="taxonomic scope" value="Bacteria"/>
</dbReference>
<dbReference type="HOGENOM" id="CLU_129938_3_0_0"/>
<dbReference type="InParanoid" id="O66563"/>
<dbReference type="Proteomes" id="UP000000798">
    <property type="component" value="Chromosome"/>
</dbReference>
<dbReference type="GO" id="GO:1990904">
    <property type="term" value="C:ribonucleoprotein complex"/>
    <property type="evidence" value="ECO:0007669"/>
    <property type="project" value="UniProtKB-KW"/>
</dbReference>
<dbReference type="GO" id="GO:0005840">
    <property type="term" value="C:ribosome"/>
    <property type="evidence" value="ECO:0007669"/>
    <property type="project" value="UniProtKB-KW"/>
</dbReference>
<dbReference type="GO" id="GO:0003735">
    <property type="term" value="F:structural constituent of ribosome"/>
    <property type="evidence" value="ECO:0007669"/>
    <property type="project" value="InterPro"/>
</dbReference>
<dbReference type="GO" id="GO:0006412">
    <property type="term" value="P:translation"/>
    <property type="evidence" value="ECO:0007669"/>
    <property type="project" value="UniProtKB-UniRule"/>
</dbReference>
<dbReference type="Gene3D" id="1.10.287.3980">
    <property type="match status" value="1"/>
</dbReference>
<dbReference type="HAMAP" id="MF_00391">
    <property type="entry name" value="Ribosomal_bL34"/>
    <property type="match status" value="1"/>
</dbReference>
<dbReference type="InterPro" id="IPR000271">
    <property type="entry name" value="Ribosomal_bL34"/>
</dbReference>
<dbReference type="NCBIfam" id="TIGR01030">
    <property type="entry name" value="rpmH_bact"/>
    <property type="match status" value="1"/>
</dbReference>
<dbReference type="PANTHER" id="PTHR14503:SF4">
    <property type="entry name" value="LARGE RIBOSOMAL SUBUNIT PROTEIN BL34M"/>
    <property type="match status" value="1"/>
</dbReference>
<dbReference type="PANTHER" id="PTHR14503">
    <property type="entry name" value="MITOCHONDRIAL RIBOSOMAL PROTEIN 34 FAMILY MEMBER"/>
    <property type="match status" value="1"/>
</dbReference>
<dbReference type="Pfam" id="PF00468">
    <property type="entry name" value="Ribosomal_L34"/>
    <property type="match status" value="1"/>
</dbReference>